<name>RL19_STRM5</name>
<sequence length="133" mass="14461">MSKLNKSIVAEFESAQITRELPKFSQGDTVVVNVKVKEGARERVQAYEGVVIATKNGGLNSSFTVRKISHGYGVERVFQTHSAIIDSVEVKRRGKVRAGKLYYLRGLEGKAARIKEDLAAAAAAKAARLAEKA</sequence>
<organism>
    <name type="scientific">Stenotrophomonas maltophilia (strain R551-3)</name>
    <dbReference type="NCBI Taxonomy" id="391008"/>
    <lineage>
        <taxon>Bacteria</taxon>
        <taxon>Pseudomonadati</taxon>
        <taxon>Pseudomonadota</taxon>
        <taxon>Gammaproteobacteria</taxon>
        <taxon>Lysobacterales</taxon>
        <taxon>Lysobacteraceae</taxon>
        <taxon>Stenotrophomonas</taxon>
        <taxon>Stenotrophomonas maltophilia group</taxon>
    </lineage>
</organism>
<protein>
    <recommendedName>
        <fullName evidence="1">Large ribosomal subunit protein bL19</fullName>
    </recommendedName>
    <alternativeName>
        <fullName evidence="2">50S ribosomal protein L19</fullName>
    </alternativeName>
</protein>
<gene>
    <name evidence="1" type="primary">rplS</name>
    <name type="ordered locus">Smal_1156</name>
</gene>
<reference key="1">
    <citation type="submission" date="2008-06" db="EMBL/GenBank/DDBJ databases">
        <title>Complete sequence of Stenotrophomonas maltophilia R551-3.</title>
        <authorList>
            <consortium name="US DOE Joint Genome Institute"/>
            <person name="Lucas S."/>
            <person name="Copeland A."/>
            <person name="Lapidus A."/>
            <person name="Glavina del Rio T."/>
            <person name="Dalin E."/>
            <person name="Tice H."/>
            <person name="Pitluck S."/>
            <person name="Chain P."/>
            <person name="Malfatti S."/>
            <person name="Shin M."/>
            <person name="Vergez L."/>
            <person name="Lang D."/>
            <person name="Schmutz J."/>
            <person name="Larimer F."/>
            <person name="Land M."/>
            <person name="Hauser L."/>
            <person name="Kyrpides N."/>
            <person name="Mikhailova N."/>
            <person name="Taghavi S."/>
            <person name="Monchy S."/>
            <person name="Newman L."/>
            <person name="Vangronsveld J."/>
            <person name="van der Lelie D."/>
            <person name="Richardson P."/>
        </authorList>
    </citation>
    <scope>NUCLEOTIDE SEQUENCE [LARGE SCALE GENOMIC DNA]</scope>
    <source>
        <strain>R551-3</strain>
    </source>
</reference>
<comment type="function">
    <text evidence="1">This protein is located at the 30S-50S ribosomal subunit interface and may play a role in the structure and function of the aminoacyl-tRNA binding site.</text>
</comment>
<comment type="similarity">
    <text evidence="1">Belongs to the bacterial ribosomal protein bL19 family.</text>
</comment>
<keyword id="KW-0687">Ribonucleoprotein</keyword>
<keyword id="KW-0689">Ribosomal protein</keyword>
<evidence type="ECO:0000255" key="1">
    <source>
        <dbReference type="HAMAP-Rule" id="MF_00402"/>
    </source>
</evidence>
<evidence type="ECO:0000305" key="2"/>
<dbReference type="EMBL" id="CP001111">
    <property type="protein sequence ID" value="ACF50861.1"/>
    <property type="molecule type" value="Genomic_DNA"/>
</dbReference>
<dbReference type="RefSeq" id="WP_004149090.1">
    <property type="nucleotide sequence ID" value="NC_011071.1"/>
</dbReference>
<dbReference type="SMR" id="B4SPH4"/>
<dbReference type="STRING" id="391008.Smal_1156"/>
<dbReference type="KEGG" id="smt:Smal_1156"/>
<dbReference type="eggNOG" id="COG0335">
    <property type="taxonomic scope" value="Bacteria"/>
</dbReference>
<dbReference type="HOGENOM" id="CLU_103507_2_1_6"/>
<dbReference type="OrthoDB" id="9803541at2"/>
<dbReference type="Proteomes" id="UP000001867">
    <property type="component" value="Chromosome"/>
</dbReference>
<dbReference type="GO" id="GO:0022625">
    <property type="term" value="C:cytosolic large ribosomal subunit"/>
    <property type="evidence" value="ECO:0007669"/>
    <property type="project" value="TreeGrafter"/>
</dbReference>
<dbReference type="GO" id="GO:0003735">
    <property type="term" value="F:structural constituent of ribosome"/>
    <property type="evidence" value="ECO:0007669"/>
    <property type="project" value="InterPro"/>
</dbReference>
<dbReference type="GO" id="GO:0006412">
    <property type="term" value="P:translation"/>
    <property type="evidence" value="ECO:0007669"/>
    <property type="project" value="UniProtKB-UniRule"/>
</dbReference>
<dbReference type="FunFam" id="2.30.30.790:FF:000001">
    <property type="entry name" value="50S ribosomal protein L19"/>
    <property type="match status" value="1"/>
</dbReference>
<dbReference type="Gene3D" id="2.30.30.790">
    <property type="match status" value="1"/>
</dbReference>
<dbReference type="HAMAP" id="MF_00402">
    <property type="entry name" value="Ribosomal_bL19"/>
    <property type="match status" value="1"/>
</dbReference>
<dbReference type="InterPro" id="IPR001857">
    <property type="entry name" value="Ribosomal_bL19"/>
</dbReference>
<dbReference type="InterPro" id="IPR018257">
    <property type="entry name" value="Ribosomal_bL19_CS"/>
</dbReference>
<dbReference type="InterPro" id="IPR038657">
    <property type="entry name" value="Ribosomal_bL19_sf"/>
</dbReference>
<dbReference type="InterPro" id="IPR008991">
    <property type="entry name" value="Translation_prot_SH3-like_sf"/>
</dbReference>
<dbReference type="NCBIfam" id="TIGR01024">
    <property type="entry name" value="rplS_bact"/>
    <property type="match status" value="1"/>
</dbReference>
<dbReference type="PANTHER" id="PTHR15680:SF9">
    <property type="entry name" value="LARGE RIBOSOMAL SUBUNIT PROTEIN BL19M"/>
    <property type="match status" value="1"/>
</dbReference>
<dbReference type="PANTHER" id="PTHR15680">
    <property type="entry name" value="RIBOSOMAL PROTEIN L19"/>
    <property type="match status" value="1"/>
</dbReference>
<dbReference type="Pfam" id="PF01245">
    <property type="entry name" value="Ribosomal_L19"/>
    <property type="match status" value="1"/>
</dbReference>
<dbReference type="PIRSF" id="PIRSF002191">
    <property type="entry name" value="Ribosomal_L19"/>
    <property type="match status" value="1"/>
</dbReference>
<dbReference type="PRINTS" id="PR00061">
    <property type="entry name" value="RIBOSOMALL19"/>
</dbReference>
<dbReference type="SUPFAM" id="SSF50104">
    <property type="entry name" value="Translation proteins SH3-like domain"/>
    <property type="match status" value="1"/>
</dbReference>
<dbReference type="PROSITE" id="PS01015">
    <property type="entry name" value="RIBOSOMAL_L19"/>
    <property type="match status" value="1"/>
</dbReference>
<accession>B4SPH4</accession>
<feature type="chain" id="PRO_1000193890" description="Large ribosomal subunit protein bL19">
    <location>
        <begin position="1"/>
        <end position="133"/>
    </location>
</feature>
<proteinExistence type="inferred from homology"/>